<comment type="function">
    <text evidence="1">One of several proteins that assist in the late maturation steps of the functional core of the 30S ribosomal subunit. Helps release RbfA from mature subunits. May play a role in the assembly of ribosomal proteins into the subunit. Circularly permuted GTPase that catalyzes slow GTP hydrolysis, GTPase activity is stimulated by the 30S ribosomal subunit.</text>
</comment>
<comment type="cofactor">
    <cofactor evidence="1">
        <name>Zn(2+)</name>
        <dbReference type="ChEBI" id="CHEBI:29105"/>
    </cofactor>
    <text evidence="1">Binds 1 zinc ion per subunit.</text>
</comment>
<comment type="subunit">
    <text evidence="1">Monomer. Associates with 30S ribosomal subunit, binds 16S rRNA.</text>
</comment>
<comment type="subcellular location">
    <subcellularLocation>
        <location evidence="1">Cytoplasm</location>
    </subcellularLocation>
</comment>
<comment type="similarity">
    <text evidence="1">Belongs to the TRAFAC class YlqF/YawG GTPase family. RsgA subfamily.</text>
</comment>
<feature type="chain" id="PRO_1000188029" description="Small ribosomal subunit biogenesis GTPase RsgA">
    <location>
        <begin position="1"/>
        <end position="296"/>
    </location>
</feature>
<feature type="domain" description="CP-type G" evidence="2">
    <location>
        <begin position="65"/>
        <end position="226"/>
    </location>
</feature>
<feature type="binding site" evidence="1">
    <location>
        <begin position="114"/>
        <end position="117"/>
    </location>
    <ligand>
        <name>GTP</name>
        <dbReference type="ChEBI" id="CHEBI:37565"/>
    </ligand>
</feature>
<feature type="binding site" evidence="1">
    <location>
        <begin position="169"/>
        <end position="177"/>
    </location>
    <ligand>
        <name>GTP</name>
        <dbReference type="ChEBI" id="CHEBI:37565"/>
    </ligand>
</feature>
<feature type="binding site" evidence="1">
    <location>
        <position position="250"/>
    </location>
    <ligand>
        <name>Zn(2+)</name>
        <dbReference type="ChEBI" id="CHEBI:29105"/>
    </ligand>
</feature>
<feature type="binding site" evidence="1">
    <location>
        <position position="255"/>
    </location>
    <ligand>
        <name>Zn(2+)</name>
        <dbReference type="ChEBI" id="CHEBI:29105"/>
    </ligand>
</feature>
<feature type="binding site" evidence="1">
    <location>
        <position position="257"/>
    </location>
    <ligand>
        <name>Zn(2+)</name>
        <dbReference type="ChEBI" id="CHEBI:29105"/>
    </ligand>
</feature>
<feature type="binding site" evidence="1">
    <location>
        <position position="263"/>
    </location>
    <ligand>
        <name>Zn(2+)</name>
        <dbReference type="ChEBI" id="CHEBI:29105"/>
    </ligand>
</feature>
<evidence type="ECO:0000255" key="1">
    <source>
        <dbReference type="HAMAP-Rule" id="MF_01820"/>
    </source>
</evidence>
<evidence type="ECO:0000255" key="2">
    <source>
        <dbReference type="PROSITE-ProRule" id="PRU01058"/>
    </source>
</evidence>
<name>RSGA_BACVZ</name>
<keyword id="KW-0963">Cytoplasm</keyword>
<keyword id="KW-0342">GTP-binding</keyword>
<keyword id="KW-0378">Hydrolase</keyword>
<keyword id="KW-0479">Metal-binding</keyword>
<keyword id="KW-0547">Nucleotide-binding</keyword>
<keyword id="KW-0690">Ribosome biogenesis</keyword>
<keyword id="KW-0694">RNA-binding</keyword>
<keyword id="KW-0699">rRNA-binding</keyword>
<keyword id="KW-0862">Zinc</keyword>
<reference key="1">
    <citation type="journal article" date="2007" name="Nat. Biotechnol.">
        <title>Comparative analysis of the complete genome sequence of the plant growth-promoting bacterium Bacillus amyloliquefaciens FZB42.</title>
        <authorList>
            <person name="Chen X.H."/>
            <person name="Koumoutsi A."/>
            <person name="Scholz R."/>
            <person name="Eisenreich A."/>
            <person name="Schneider K."/>
            <person name="Heinemeyer I."/>
            <person name="Morgenstern B."/>
            <person name="Voss B."/>
            <person name="Hess W.R."/>
            <person name="Reva O."/>
            <person name="Junge H."/>
            <person name="Voigt B."/>
            <person name="Jungblut P.R."/>
            <person name="Vater J."/>
            <person name="Suessmuth R."/>
            <person name="Liesegang H."/>
            <person name="Strittmatter A."/>
            <person name="Gottschalk G."/>
            <person name="Borriss R."/>
        </authorList>
    </citation>
    <scope>NUCLEOTIDE SEQUENCE [LARGE SCALE GENOMIC DNA]</scope>
    <source>
        <strain>DSM 23117 / BGSC 10A6 / LMG 26770 / FZB42</strain>
    </source>
</reference>
<gene>
    <name evidence="1" type="primary">rsgA</name>
    <name type="ordered locus">RBAM_015610</name>
</gene>
<proteinExistence type="inferred from homology"/>
<organism>
    <name type="scientific">Bacillus velezensis (strain DSM 23117 / BGSC 10A6 / LMG 26770 / FZB42)</name>
    <name type="common">Bacillus amyloliquefaciens subsp. plantarum</name>
    <dbReference type="NCBI Taxonomy" id="326423"/>
    <lineage>
        <taxon>Bacteria</taxon>
        <taxon>Bacillati</taxon>
        <taxon>Bacillota</taxon>
        <taxon>Bacilli</taxon>
        <taxon>Bacillales</taxon>
        <taxon>Bacillaceae</taxon>
        <taxon>Bacillus</taxon>
        <taxon>Bacillus amyloliquefaciens group</taxon>
    </lineage>
</organism>
<accession>A7Z4J8</accession>
<sequence>MPEGKIIKALSGFYYVLDESQDKIIQCRGRGIFRKNKITPLVGDYAVYQAENDKEGYLLEIKERTNELIRPPISNVDQAVLVFSAVQPAFSTSLLDRFLVLVEANGIHPIICITKMDLAADGESKEAILSYVKDYQAIGYDVYVTSSKENSGLTGIVKHFENKTTVFAGQSGVGKSSLLNAISPELELKTNEISTHLGRGKHTTRHVELIHTSGGLVADTPGFSSLEFTGIEEEELGSTFPEIREISASCKFRGCLHLKEPKCAVKQAVEEGEIQPYRYEHYKEFMQEIKERKPRY</sequence>
<protein>
    <recommendedName>
        <fullName evidence="1">Small ribosomal subunit biogenesis GTPase RsgA</fullName>
        <ecNumber evidence="1">3.6.1.-</ecNumber>
    </recommendedName>
</protein>
<dbReference type="EC" id="3.6.1.-" evidence="1"/>
<dbReference type="EMBL" id="CP000560">
    <property type="protein sequence ID" value="ABS73924.1"/>
    <property type="molecule type" value="Genomic_DNA"/>
</dbReference>
<dbReference type="RefSeq" id="WP_012117535.1">
    <property type="nucleotide sequence ID" value="NC_009725.2"/>
</dbReference>
<dbReference type="SMR" id="A7Z4J8"/>
<dbReference type="GeneID" id="93080694"/>
<dbReference type="KEGG" id="bay:RBAM_015610"/>
<dbReference type="HOGENOM" id="CLU_033617_2_1_9"/>
<dbReference type="Proteomes" id="UP000001120">
    <property type="component" value="Chromosome"/>
</dbReference>
<dbReference type="GO" id="GO:0005737">
    <property type="term" value="C:cytoplasm"/>
    <property type="evidence" value="ECO:0007669"/>
    <property type="project" value="UniProtKB-SubCell"/>
</dbReference>
<dbReference type="GO" id="GO:0005525">
    <property type="term" value="F:GTP binding"/>
    <property type="evidence" value="ECO:0007669"/>
    <property type="project" value="UniProtKB-UniRule"/>
</dbReference>
<dbReference type="GO" id="GO:0003924">
    <property type="term" value="F:GTPase activity"/>
    <property type="evidence" value="ECO:0007669"/>
    <property type="project" value="UniProtKB-UniRule"/>
</dbReference>
<dbReference type="GO" id="GO:0046872">
    <property type="term" value="F:metal ion binding"/>
    <property type="evidence" value="ECO:0007669"/>
    <property type="project" value="UniProtKB-KW"/>
</dbReference>
<dbReference type="GO" id="GO:0019843">
    <property type="term" value="F:rRNA binding"/>
    <property type="evidence" value="ECO:0007669"/>
    <property type="project" value="UniProtKB-KW"/>
</dbReference>
<dbReference type="GO" id="GO:0042274">
    <property type="term" value="P:ribosomal small subunit biogenesis"/>
    <property type="evidence" value="ECO:0007669"/>
    <property type="project" value="UniProtKB-UniRule"/>
</dbReference>
<dbReference type="CDD" id="cd04466">
    <property type="entry name" value="S1_YloQ_GTPase"/>
    <property type="match status" value="1"/>
</dbReference>
<dbReference type="CDD" id="cd01854">
    <property type="entry name" value="YjeQ_EngC"/>
    <property type="match status" value="1"/>
</dbReference>
<dbReference type="Gene3D" id="2.40.50.140">
    <property type="entry name" value="Nucleic acid-binding proteins"/>
    <property type="match status" value="1"/>
</dbReference>
<dbReference type="Gene3D" id="3.40.50.300">
    <property type="entry name" value="P-loop containing nucleotide triphosphate hydrolases"/>
    <property type="match status" value="1"/>
</dbReference>
<dbReference type="Gene3D" id="1.10.40.50">
    <property type="entry name" value="Probable gtpase engc, domain 3"/>
    <property type="match status" value="1"/>
</dbReference>
<dbReference type="HAMAP" id="MF_01820">
    <property type="entry name" value="GTPase_RsgA"/>
    <property type="match status" value="1"/>
</dbReference>
<dbReference type="InterPro" id="IPR030378">
    <property type="entry name" value="G_CP_dom"/>
</dbReference>
<dbReference type="InterPro" id="IPR012340">
    <property type="entry name" value="NA-bd_OB-fold"/>
</dbReference>
<dbReference type="InterPro" id="IPR027417">
    <property type="entry name" value="P-loop_NTPase"/>
</dbReference>
<dbReference type="InterPro" id="IPR004881">
    <property type="entry name" value="Ribosome_biogen_GTPase_RsgA"/>
</dbReference>
<dbReference type="InterPro" id="IPR010914">
    <property type="entry name" value="RsgA_GTPase_dom"/>
</dbReference>
<dbReference type="InterPro" id="IPR031944">
    <property type="entry name" value="RsgA_N"/>
</dbReference>
<dbReference type="NCBIfam" id="TIGR00157">
    <property type="entry name" value="ribosome small subunit-dependent GTPase A"/>
    <property type="match status" value="1"/>
</dbReference>
<dbReference type="PANTHER" id="PTHR32120">
    <property type="entry name" value="SMALL RIBOSOMAL SUBUNIT BIOGENESIS GTPASE RSGA"/>
    <property type="match status" value="1"/>
</dbReference>
<dbReference type="PANTHER" id="PTHR32120:SF11">
    <property type="entry name" value="SMALL RIBOSOMAL SUBUNIT BIOGENESIS GTPASE RSGA 1, MITOCHONDRIAL-RELATED"/>
    <property type="match status" value="1"/>
</dbReference>
<dbReference type="Pfam" id="PF03193">
    <property type="entry name" value="RsgA_GTPase"/>
    <property type="match status" value="1"/>
</dbReference>
<dbReference type="Pfam" id="PF16745">
    <property type="entry name" value="RsgA_N"/>
    <property type="match status" value="1"/>
</dbReference>
<dbReference type="SUPFAM" id="SSF50249">
    <property type="entry name" value="Nucleic acid-binding proteins"/>
    <property type="match status" value="1"/>
</dbReference>
<dbReference type="SUPFAM" id="SSF52540">
    <property type="entry name" value="P-loop containing nucleoside triphosphate hydrolases"/>
    <property type="match status" value="1"/>
</dbReference>
<dbReference type="PROSITE" id="PS50936">
    <property type="entry name" value="ENGC_GTPASE"/>
    <property type="match status" value="1"/>
</dbReference>
<dbReference type="PROSITE" id="PS51721">
    <property type="entry name" value="G_CP"/>
    <property type="match status" value="1"/>
</dbReference>